<evidence type="ECO:0000255" key="1">
    <source>
        <dbReference type="HAMAP-Rule" id="MF_00156"/>
    </source>
</evidence>
<dbReference type="EC" id="2.1.2.11" evidence="1"/>
<dbReference type="EMBL" id="BX897700">
    <property type="protein sequence ID" value="CAF25931.1"/>
    <property type="molecule type" value="Genomic_DNA"/>
</dbReference>
<dbReference type="RefSeq" id="WP_011179220.1">
    <property type="nucleotide sequence ID" value="NC_005955.1"/>
</dbReference>
<dbReference type="SMR" id="Q6G078"/>
<dbReference type="KEGG" id="bqu:BQ04320"/>
<dbReference type="eggNOG" id="COG0413">
    <property type="taxonomic scope" value="Bacteria"/>
</dbReference>
<dbReference type="HOGENOM" id="CLU_036645_1_0_5"/>
<dbReference type="OrthoDB" id="9781789at2"/>
<dbReference type="UniPathway" id="UPA00028">
    <property type="reaction ID" value="UER00003"/>
</dbReference>
<dbReference type="Proteomes" id="UP000000597">
    <property type="component" value="Chromosome"/>
</dbReference>
<dbReference type="GO" id="GO:0005737">
    <property type="term" value="C:cytoplasm"/>
    <property type="evidence" value="ECO:0007669"/>
    <property type="project" value="UniProtKB-SubCell"/>
</dbReference>
<dbReference type="GO" id="GO:0003864">
    <property type="term" value="F:3-methyl-2-oxobutanoate hydroxymethyltransferase activity"/>
    <property type="evidence" value="ECO:0007669"/>
    <property type="project" value="UniProtKB-UniRule"/>
</dbReference>
<dbReference type="GO" id="GO:0000287">
    <property type="term" value="F:magnesium ion binding"/>
    <property type="evidence" value="ECO:0007669"/>
    <property type="project" value="TreeGrafter"/>
</dbReference>
<dbReference type="GO" id="GO:0015940">
    <property type="term" value="P:pantothenate biosynthetic process"/>
    <property type="evidence" value="ECO:0007669"/>
    <property type="project" value="UniProtKB-UniRule"/>
</dbReference>
<dbReference type="CDD" id="cd06557">
    <property type="entry name" value="KPHMT-like"/>
    <property type="match status" value="1"/>
</dbReference>
<dbReference type="FunFam" id="3.20.20.60:FF:000003">
    <property type="entry name" value="3-methyl-2-oxobutanoate hydroxymethyltransferase"/>
    <property type="match status" value="1"/>
</dbReference>
<dbReference type="Gene3D" id="3.20.20.60">
    <property type="entry name" value="Phosphoenolpyruvate-binding domains"/>
    <property type="match status" value="1"/>
</dbReference>
<dbReference type="HAMAP" id="MF_00156">
    <property type="entry name" value="PanB"/>
    <property type="match status" value="1"/>
</dbReference>
<dbReference type="InterPro" id="IPR003700">
    <property type="entry name" value="Pantoate_hydroxy_MeTrfase"/>
</dbReference>
<dbReference type="InterPro" id="IPR015813">
    <property type="entry name" value="Pyrv/PenolPyrv_kinase-like_dom"/>
</dbReference>
<dbReference type="InterPro" id="IPR040442">
    <property type="entry name" value="Pyrv_kinase-like_dom_sf"/>
</dbReference>
<dbReference type="NCBIfam" id="TIGR00222">
    <property type="entry name" value="panB"/>
    <property type="match status" value="1"/>
</dbReference>
<dbReference type="NCBIfam" id="NF001452">
    <property type="entry name" value="PRK00311.1"/>
    <property type="match status" value="1"/>
</dbReference>
<dbReference type="PANTHER" id="PTHR20881">
    <property type="entry name" value="3-METHYL-2-OXOBUTANOATE HYDROXYMETHYLTRANSFERASE"/>
    <property type="match status" value="1"/>
</dbReference>
<dbReference type="PANTHER" id="PTHR20881:SF0">
    <property type="entry name" value="3-METHYL-2-OXOBUTANOATE HYDROXYMETHYLTRANSFERASE"/>
    <property type="match status" value="1"/>
</dbReference>
<dbReference type="Pfam" id="PF02548">
    <property type="entry name" value="Pantoate_transf"/>
    <property type="match status" value="1"/>
</dbReference>
<dbReference type="PIRSF" id="PIRSF000388">
    <property type="entry name" value="Pantoate_hydroxy_MeTrfase"/>
    <property type="match status" value="1"/>
</dbReference>
<dbReference type="SUPFAM" id="SSF51621">
    <property type="entry name" value="Phosphoenolpyruvate/pyruvate domain"/>
    <property type="match status" value="1"/>
</dbReference>
<feature type="chain" id="PRO_0000184819" description="3-methyl-2-oxobutanoate hydroxymethyltransferase">
    <location>
        <begin position="1"/>
        <end position="275"/>
    </location>
</feature>
<feature type="active site" description="Proton acceptor" evidence="1">
    <location>
        <position position="187"/>
    </location>
</feature>
<feature type="binding site" evidence="1">
    <location>
        <begin position="49"/>
        <end position="50"/>
    </location>
    <ligand>
        <name>3-methyl-2-oxobutanoate</name>
        <dbReference type="ChEBI" id="CHEBI:11851"/>
    </ligand>
</feature>
<feature type="binding site" evidence="1">
    <location>
        <position position="49"/>
    </location>
    <ligand>
        <name>Mg(2+)</name>
        <dbReference type="ChEBI" id="CHEBI:18420"/>
    </ligand>
</feature>
<feature type="binding site" evidence="1">
    <location>
        <position position="88"/>
    </location>
    <ligand>
        <name>3-methyl-2-oxobutanoate</name>
        <dbReference type="ChEBI" id="CHEBI:11851"/>
    </ligand>
</feature>
<feature type="binding site" evidence="1">
    <location>
        <position position="88"/>
    </location>
    <ligand>
        <name>Mg(2+)</name>
        <dbReference type="ChEBI" id="CHEBI:18420"/>
    </ligand>
</feature>
<feature type="binding site" evidence="1">
    <location>
        <position position="118"/>
    </location>
    <ligand>
        <name>3-methyl-2-oxobutanoate</name>
        <dbReference type="ChEBI" id="CHEBI:11851"/>
    </ligand>
</feature>
<feature type="binding site" evidence="1">
    <location>
        <position position="120"/>
    </location>
    <ligand>
        <name>Mg(2+)</name>
        <dbReference type="ChEBI" id="CHEBI:18420"/>
    </ligand>
</feature>
<organism>
    <name type="scientific">Bartonella quintana (strain Toulouse)</name>
    <name type="common">Rochalimaea quintana</name>
    <dbReference type="NCBI Taxonomy" id="283165"/>
    <lineage>
        <taxon>Bacteria</taxon>
        <taxon>Pseudomonadati</taxon>
        <taxon>Pseudomonadota</taxon>
        <taxon>Alphaproteobacteria</taxon>
        <taxon>Hyphomicrobiales</taxon>
        <taxon>Bartonellaceae</taxon>
        <taxon>Bartonella</taxon>
    </lineage>
</organism>
<protein>
    <recommendedName>
        <fullName evidence="1">3-methyl-2-oxobutanoate hydroxymethyltransferase</fullName>
        <ecNumber evidence="1">2.1.2.11</ecNumber>
    </recommendedName>
    <alternativeName>
        <fullName evidence="1">Ketopantoate hydroxymethyltransferase</fullName>
        <shortName evidence="1">KPHMT</shortName>
    </alternativeName>
</protein>
<name>PANB_BARQU</name>
<gene>
    <name evidence="1" type="primary">panB</name>
    <name type="ordered locus">BQ04320</name>
</gene>
<keyword id="KW-0963">Cytoplasm</keyword>
<keyword id="KW-0460">Magnesium</keyword>
<keyword id="KW-0479">Metal-binding</keyword>
<keyword id="KW-0566">Pantothenate biosynthesis</keyword>
<keyword id="KW-0808">Transferase</keyword>
<reference key="1">
    <citation type="journal article" date="2004" name="Proc. Natl. Acad. Sci. U.S.A.">
        <title>The louse-borne human pathogen Bartonella quintana is a genomic derivative of the zoonotic agent Bartonella henselae.</title>
        <authorList>
            <person name="Alsmark U.C.M."/>
            <person name="Frank A.C."/>
            <person name="Karlberg E.O."/>
            <person name="Legault B.-A."/>
            <person name="Ardell D.H."/>
            <person name="Canbaeck B."/>
            <person name="Eriksson A.-S."/>
            <person name="Naeslund A.K."/>
            <person name="Handley S.A."/>
            <person name="Huvet M."/>
            <person name="La Scola B."/>
            <person name="Holmberg M."/>
            <person name="Andersson S.G.E."/>
        </authorList>
    </citation>
    <scope>NUCLEOTIDE SEQUENCE [LARGE SCALE GENOMIC DNA]</scope>
    <source>
        <strain>Toulouse</strain>
    </source>
</reference>
<comment type="function">
    <text evidence="1">Catalyzes the reversible reaction in which hydroxymethyl group from 5,10-methylenetetrahydrofolate is transferred onto alpha-ketoisovalerate to form ketopantoate.</text>
</comment>
<comment type="catalytic activity">
    <reaction evidence="1">
        <text>3-methyl-2-oxobutanoate + (6R)-5,10-methylene-5,6,7,8-tetrahydrofolate + H2O = 2-dehydropantoate + (6S)-5,6,7,8-tetrahydrofolate</text>
        <dbReference type="Rhea" id="RHEA:11824"/>
        <dbReference type="ChEBI" id="CHEBI:11561"/>
        <dbReference type="ChEBI" id="CHEBI:11851"/>
        <dbReference type="ChEBI" id="CHEBI:15377"/>
        <dbReference type="ChEBI" id="CHEBI:15636"/>
        <dbReference type="ChEBI" id="CHEBI:57453"/>
        <dbReference type="EC" id="2.1.2.11"/>
    </reaction>
</comment>
<comment type="cofactor">
    <cofactor evidence="1">
        <name>Mg(2+)</name>
        <dbReference type="ChEBI" id="CHEBI:18420"/>
    </cofactor>
    <text evidence="1">Binds 1 Mg(2+) ion per subunit.</text>
</comment>
<comment type="pathway">
    <text evidence="1">Cofactor biosynthesis; (R)-pantothenate biosynthesis; (R)-pantoate from 3-methyl-2-oxobutanoate: step 1/2.</text>
</comment>
<comment type="subunit">
    <text evidence="1">Homodecamer; pentamer of dimers.</text>
</comment>
<comment type="subcellular location">
    <subcellularLocation>
        <location evidence="1">Cytoplasm</location>
    </subcellularLocation>
</comment>
<comment type="similarity">
    <text evidence="1">Belongs to the PanB family.</text>
</comment>
<accession>Q6G078</accession>
<sequence>MSIHQTIKRITAAEIRSRKGQEPIVSLTAYQAYSARIADPYCDFLLVGDSVGMVVHGFETTLPVSLDMMILHGQAVMRGAKKALVVIDMPFGSYEESPEQAFSNASRILAETGCGAVKLEGGVYIAETIDFLCKRGIPVMGHIGLTPQAVNRFGGFKTQGRNESNWQQIEADAAAIEEAGAFAVVVEGVVEPLAVRLTEMLSIPTIGIGASSQCDGQILVMEDMLGYGTWVPKFVRRYGALEQEMEKAIKSYADDVKSRAFPSEAEIYKLKQKSG</sequence>
<proteinExistence type="inferred from homology"/>